<proteinExistence type="inferred from homology"/>
<protein>
    <recommendedName>
        <fullName evidence="1">Large ribosomal subunit protein bL31</fullName>
    </recommendedName>
    <alternativeName>
        <fullName evidence="2">50S ribosomal protein L31</fullName>
    </alternativeName>
</protein>
<gene>
    <name evidence="1" type="primary">rpmE</name>
    <name type="ordered locus">BMEI0322</name>
</gene>
<organism>
    <name type="scientific">Brucella melitensis biotype 1 (strain ATCC 23456 / CCUG 17765 / NCTC 10094 / 16M)</name>
    <dbReference type="NCBI Taxonomy" id="224914"/>
    <lineage>
        <taxon>Bacteria</taxon>
        <taxon>Pseudomonadati</taxon>
        <taxon>Pseudomonadota</taxon>
        <taxon>Alphaproteobacteria</taxon>
        <taxon>Hyphomicrobiales</taxon>
        <taxon>Brucellaceae</taxon>
        <taxon>Brucella/Ochrobactrum group</taxon>
        <taxon>Brucella</taxon>
    </lineage>
</organism>
<reference key="1">
    <citation type="journal article" date="2002" name="Proc. Natl. Acad. Sci. U.S.A.">
        <title>The genome sequence of the facultative intracellular pathogen Brucella melitensis.</title>
        <authorList>
            <person name="DelVecchio V.G."/>
            <person name="Kapatral V."/>
            <person name="Redkar R.J."/>
            <person name="Patra G."/>
            <person name="Mujer C."/>
            <person name="Los T."/>
            <person name="Ivanova N."/>
            <person name="Anderson I."/>
            <person name="Bhattacharyya A."/>
            <person name="Lykidis A."/>
            <person name="Reznik G."/>
            <person name="Jablonski L."/>
            <person name="Larsen N."/>
            <person name="D'Souza M."/>
            <person name="Bernal A."/>
            <person name="Mazur M."/>
            <person name="Goltsman E."/>
            <person name="Selkov E."/>
            <person name="Elzer P.H."/>
            <person name="Hagius S."/>
            <person name="O'Callaghan D."/>
            <person name="Letesson J.-J."/>
            <person name="Haselkorn R."/>
            <person name="Kyrpides N.C."/>
            <person name="Overbeek R."/>
        </authorList>
    </citation>
    <scope>NUCLEOTIDE SEQUENCE [LARGE SCALE GENOMIC DNA]</scope>
    <source>
        <strain>ATCC 23456 / CCUG 17765 / NCTC 10094 / 16M</strain>
    </source>
</reference>
<dbReference type="EMBL" id="AE008917">
    <property type="protein sequence ID" value="AAL51503.1"/>
    <property type="molecule type" value="Genomic_DNA"/>
</dbReference>
<dbReference type="PIR" id="AD3292">
    <property type="entry name" value="AD3292"/>
</dbReference>
<dbReference type="RefSeq" id="WP_002964804.1">
    <property type="nucleotide sequence ID" value="NZ_GG703781.1"/>
</dbReference>
<dbReference type="SMR" id="P66183"/>
<dbReference type="GeneID" id="97533132"/>
<dbReference type="KEGG" id="bme:BMEI0322"/>
<dbReference type="KEGG" id="bmel:DK63_1112"/>
<dbReference type="PATRIC" id="fig|224914.52.peg.1171"/>
<dbReference type="eggNOG" id="COG0254">
    <property type="taxonomic scope" value="Bacteria"/>
</dbReference>
<dbReference type="Proteomes" id="UP000000419">
    <property type="component" value="Chromosome I"/>
</dbReference>
<dbReference type="GO" id="GO:1990904">
    <property type="term" value="C:ribonucleoprotein complex"/>
    <property type="evidence" value="ECO:0007669"/>
    <property type="project" value="UniProtKB-KW"/>
</dbReference>
<dbReference type="GO" id="GO:0005840">
    <property type="term" value="C:ribosome"/>
    <property type="evidence" value="ECO:0007669"/>
    <property type="project" value="UniProtKB-KW"/>
</dbReference>
<dbReference type="GO" id="GO:0019843">
    <property type="term" value="F:rRNA binding"/>
    <property type="evidence" value="ECO:0007669"/>
    <property type="project" value="UniProtKB-KW"/>
</dbReference>
<dbReference type="GO" id="GO:0003735">
    <property type="term" value="F:structural constituent of ribosome"/>
    <property type="evidence" value="ECO:0007669"/>
    <property type="project" value="InterPro"/>
</dbReference>
<dbReference type="GO" id="GO:0006412">
    <property type="term" value="P:translation"/>
    <property type="evidence" value="ECO:0007669"/>
    <property type="project" value="UniProtKB-UniRule"/>
</dbReference>
<dbReference type="Gene3D" id="4.10.830.30">
    <property type="entry name" value="Ribosomal protein L31"/>
    <property type="match status" value="1"/>
</dbReference>
<dbReference type="HAMAP" id="MF_00501">
    <property type="entry name" value="Ribosomal_bL31_1"/>
    <property type="match status" value="1"/>
</dbReference>
<dbReference type="InterPro" id="IPR034704">
    <property type="entry name" value="Ribosomal_bL28/bL31-like_sf"/>
</dbReference>
<dbReference type="InterPro" id="IPR002150">
    <property type="entry name" value="Ribosomal_bL31"/>
</dbReference>
<dbReference type="InterPro" id="IPR027491">
    <property type="entry name" value="Ribosomal_bL31_A"/>
</dbReference>
<dbReference type="InterPro" id="IPR042105">
    <property type="entry name" value="Ribosomal_bL31_sf"/>
</dbReference>
<dbReference type="NCBIfam" id="TIGR00105">
    <property type="entry name" value="L31"/>
    <property type="match status" value="1"/>
</dbReference>
<dbReference type="NCBIfam" id="NF001809">
    <property type="entry name" value="PRK00528.1"/>
    <property type="match status" value="1"/>
</dbReference>
<dbReference type="PANTHER" id="PTHR33280">
    <property type="entry name" value="50S RIBOSOMAL PROTEIN L31, CHLOROPLASTIC"/>
    <property type="match status" value="1"/>
</dbReference>
<dbReference type="PANTHER" id="PTHR33280:SF6">
    <property type="entry name" value="LARGE RIBOSOMAL SUBUNIT PROTEIN BL31A"/>
    <property type="match status" value="1"/>
</dbReference>
<dbReference type="Pfam" id="PF01197">
    <property type="entry name" value="Ribosomal_L31"/>
    <property type="match status" value="1"/>
</dbReference>
<dbReference type="PRINTS" id="PR01249">
    <property type="entry name" value="RIBOSOMALL31"/>
</dbReference>
<dbReference type="SUPFAM" id="SSF143800">
    <property type="entry name" value="L28p-like"/>
    <property type="match status" value="1"/>
</dbReference>
<dbReference type="PROSITE" id="PS01143">
    <property type="entry name" value="RIBOSOMAL_L31"/>
    <property type="match status" value="1"/>
</dbReference>
<accession>P66183</accession>
<accession>Q8YIW7</accession>
<feature type="chain" id="PRO_0000173085" description="Large ribosomal subunit protein bL31">
    <location>
        <begin position="1"/>
        <end position="73"/>
    </location>
</feature>
<comment type="function">
    <text evidence="1">Binds the 23S rRNA.</text>
</comment>
<comment type="subunit">
    <text evidence="1">Part of the 50S ribosomal subunit.</text>
</comment>
<comment type="similarity">
    <text evidence="1">Belongs to the bacterial ribosomal protein bL31 family. Type A subfamily.</text>
</comment>
<evidence type="ECO:0000255" key="1">
    <source>
        <dbReference type="HAMAP-Rule" id="MF_00501"/>
    </source>
</evidence>
<evidence type="ECO:0000305" key="2"/>
<keyword id="KW-0687">Ribonucleoprotein</keyword>
<keyword id="KW-0689">Ribosomal protein</keyword>
<keyword id="KW-0694">RNA-binding</keyword>
<keyword id="KW-0699">rRNA-binding</keyword>
<sequence length="73" mass="8182">MKANIHPDYHTIKVVMTDGTEYMTRSTWGKEGDTMNLDIDPTTHPAWTGGSQTLLDRGGRVTKFKNRFGNLGI</sequence>
<name>RL31_BRUME</name>